<dbReference type="EC" id="6.3.3.3"/>
<dbReference type="EC" id="2.6.1.62"/>
<dbReference type="EMBL" id="AP003859">
    <property type="protein sequence ID" value="BAD05190.1"/>
    <property type="molecule type" value="Genomic_DNA"/>
</dbReference>
<dbReference type="EMBL" id="AP008214">
    <property type="protein sequence ID" value="BAF23268.1"/>
    <property type="molecule type" value="Genomic_DNA"/>
</dbReference>
<dbReference type="EMBL" id="AP014964">
    <property type="protein sequence ID" value="BAT04525.1"/>
    <property type="molecule type" value="Genomic_DNA"/>
</dbReference>
<dbReference type="EMBL" id="CM000145">
    <property type="protein sequence ID" value="EEE68317.1"/>
    <property type="molecule type" value="Genomic_DNA"/>
</dbReference>
<dbReference type="EMBL" id="AK100945">
    <property type="protein sequence ID" value="BAG94844.1"/>
    <property type="molecule type" value="mRNA"/>
</dbReference>
<dbReference type="RefSeq" id="XP_015650723.1">
    <property type="nucleotide sequence ID" value="XM_015795237.1"/>
</dbReference>
<dbReference type="SMR" id="Q6ZKV8"/>
<dbReference type="FunCoup" id="Q6ZKV8">
    <property type="interactions" value="296"/>
</dbReference>
<dbReference type="STRING" id="39947.Q6ZKV8"/>
<dbReference type="PaxDb" id="39947-Q6ZKV8"/>
<dbReference type="EnsemblPlants" id="Os08t0245400-01">
    <property type="protein sequence ID" value="Os08t0245400-01"/>
    <property type="gene ID" value="Os08g0245400"/>
</dbReference>
<dbReference type="Gramene" id="Os08t0245400-01">
    <property type="protein sequence ID" value="Os08t0245400-01"/>
    <property type="gene ID" value="Os08g0245400"/>
</dbReference>
<dbReference type="KEGG" id="dosa:Os08g0245400"/>
<dbReference type="eggNOG" id="KOG1401">
    <property type="taxonomic scope" value="Eukaryota"/>
</dbReference>
<dbReference type="HOGENOM" id="CLU_010794_0_0_1"/>
<dbReference type="InParanoid" id="Q6ZKV8"/>
<dbReference type="OMA" id="KGWASRA"/>
<dbReference type="OrthoDB" id="425114at2759"/>
<dbReference type="PlantReactome" id="R-OSA-1119610">
    <property type="pathway name" value="Biotin biosynthesis II"/>
</dbReference>
<dbReference type="UniPathway" id="UPA00078">
    <property type="reaction ID" value="UER00160"/>
</dbReference>
<dbReference type="UniPathway" id="UPA00078">
    <property type="reaction ID" value="UER00161"/>
</dbReference>
<dbReference type="Proteomes" id="UP000000763">
    <property type="component" value="Chromosome 8"/>
</dbReference>
<dbReference type="Proteomes" id="UP000007752">
    <property type="component" value="Chromosome 8"/>
</dbReference>
<dbReference type="Proteomes" id="UP000059680">
    <property type="component" value="Chromosome 8"/>
</dbReference>
<dbReference type="GO" id="GO:0005759">
    <property type="term" value="C:mitochondrial matrix"/>
    <property type="evidence" value="ECO:0007669"/>
    <property type="project" value="EnsemblPlants"/>
</dbReference>
<dbReference type="GO" id="GO:0005739">
    <property type="term" value="C:mitochondrion"/>
    <property type="evidence" value="ECO:0000318"/>
    <property type="project" value="GO_Central"/>
</dbReference>
<dbReference type="GO" id="GO:0004015">
    <property type="term" value="F:adenosylmethionine-8-amino-7-oxononanoate transaminase activity"/>
    <property type="evidence" value="ECO:0000318"/>
    <property type="project" value="GO_Central"/>
</dbReference>
<dbReference type="GO" id="GO:0005524">
    <property type="term" value="F:ATP binding"/>
    <property type="evidence" value="ECO:0007669"/>
    <property type="project" value="UniProtKB-KW"/>
</dbReference>
<dbReference type="GO" id="GO:0004141">
    <property type="term" value="F:dethiobiotin synthase activity"/>
    <property type="evidence" value="ECO:0000318"/>
    <property type="project" value="GO_Central"/>
</dbReference>
<dbReference type="GO" id="GO:0000287">
    <property type="term" value="F:magnesium ion binding"/>
    <property type="evidence" value="ECO:0007669"/>
    <property type="project" value="InterPro"/>
</dbReference>
<dbReference type="GO" id="GO:0042803">
    <property type="term" value="F:protein homodimerization activity"/>
    <property type="evidence" value="ECO:0007669"/>
    <property type="project" value="EnsemblPlants"/>
</dbReference>
<dbReference type="GO" id="GO:0030170">
    <property type="term" value="F:pyridoxal phosphate binding"/>
    <property type="evidence" value="ECO:0007669"/>
    <property type="project" value="InterPro"/>
</dbReference>
<dbReference type="GO" id="GO:0009102">
    <property type="term" value="P:biotin biosynthetic process"/>
    <property type="evidence" value="ECO:0000318"/>
    <property type="project" value="GO_Central"/>
</dbReference>
<dbReference type="CDD" id="cd03109">
    <property type="entry name" value="DTBS"/>
    <property type="match status" value="1"/>
</dbReference>
<dbReference type="FunFam" id="3.40.640.10:FF:000088">
    <property type="entry name" value="Bifunctional dethiobiotin synthetase/7,8-diamino-pelargonic acid aminotransferase"/>
    <property type="match status" value="1"/>
</dbReference>
<dbReference type="FunFam" id="3.40.50.300:FF:001675">
    <property type="entry name" value="Bifunctional dethiobiotin synthetase/7,8-diamino-pelargonic acid aminotransferase, mitochondrial"/>
    <property type="match status" value="1"/>
</dbReference>
<dbReference type="FunFam" id="3.90.1150.10:FF:000090">
    <property type="entry name" value="Bifunctional dethiobiotin synthetase/7,8-diamino-pelargonic acid aminotransferase, mitochondrial"/>
    <property type="match status" value="1"/>
</dbReference>
<dbReference type="Gene3D" id="3.90.1150.10">
    <property type="entry name" value="Aspartate Aminotransferase, domain 1"/>
    <property type="match status" value="1"/>
</dbReference>
<dbReference type="Gene3D" id="3.40.50.300">
    <property type="entry name" value="P-loop containing nucleotide triphosphate hydrolases"/>
    <property type="match status" value="1"/>
</dbReference>
<dbReference type="Gene3D" id="3.40.640.10">
    <property type="entry name" value="Type I PLP-dependent aspartate aminotransferase-like (Major domain)"/>
    <property type="match status" value="1"/>
</dbReference>
<dbReference type="HAMAP" id="MF_00336">
    <property type="entry name" value="BioD"/>
    <property type="match status" value="1"/>
</dbReference>
<dbReference type="InterPro" id="IPR005814">
    <property type="entry name" value="Aminotrans_3"/>
</dbReference>
<dbReference type="InterPro" id="IPR049704">
    <property type="entry name" value="Aminotrans_3_PPA_site"/>
</dbReference>
<dbReference type="InterPro" id="IPR004472">
    <property type="entry name" value="DTB_synth_BioD"/>
</dbReference>
<dbReference type="InterPro" id="IPR027417">
    <property type="entry name" value="P-loop_NTPase"/>
</dbReference>
<dbReference type="InterPro" id="IPR015424">
    <property type="entry name" value="PyrdxlP-dep_Trfase"/>
</dbReference>
<dbReference type="InterPro" id="IPR015421">
    <property type="entry name" value="PyrdxlP-dep_Trfase_major"/>
</dbReference>
<dbReference type="InterPro" id="IPR015422">
    <property type="entry name" value="PyrdxlP-dep_Trfase_small"/>
</dbReference>
<dbReference type="PANTHER" id="PTHR42684">
    <property type="entry name" value="ADENOSYLMETHIONINE-8-AMINO-7-OXONONANOATE AMINOTRANSFERASE"/>
    <property type="match status" value="1"/>
</dbReference>
<dbReference type="PANTHER" id="PTHR42684:SF3">
    <property type="entry name" value="ADENOSYLMETHIONINE-8-AMINO-7-OXONONANOATE AMINOTRANSFERASE"/>
    <property type="match status" value="1"/>
</dbReference>
<dbReference type="Pfam" id="PF00202">
    <property type="entry name" value="Aminotran_3"/>
    <property type="match status" value="1"/>
</dbReference>
<dbReference type="SUPFAM" id="SSF52540">
    <property type="entry name" value="P-loop containing nucleoside triphosphate hydrolases"/>
    <property type="match status" value="1"/>
</dbReference>
<dbReference type="SUPFAM" id="SSF53383">
    <property type="entry name" value="PLP-dependent transferases"/>
    <property type="match status" value="1"/>
</dbReference>
<dbReference type="PROSITE" id="PS00600">
    <property type="entry name" value="AA_TRANSFER_CLASS_3"/>
    <property type="match status" value="1"/>
</dbReference>
<sequence>MLRLLRHARRHSTSSSSSAAAAAVPLTSPAFAVFGANTGVGKTLVSAGLVASLLASPSPSPSTVAYLKPLQTGFPDDSDARFVFDRAPALLRRLRLAGGGASTRLVASNHTLFPSPAVDPLPERQDTVVNYGGEEGVEEKALVCRTVYAWREPVSPHLAAEREGMPVEDEEVRWLVDRWLAEEDGGGEVWKVLETAGGVASPGPSGTLQCDLYRSSRLPAVLVGDGRLGGISSTLSAYETLLLRGYDVGSVILEDRGLSNDRFLLSYLRKRVPVHVLPPIPEDPKDDLTDWFSESSSAFSSLKDSLQSFHSRRVQRLNSMQRKSKYLLWWPFTQHDLVPVDSVTVIDSRFGENFSAYKVKDKTIVPQFDACASWWTQGPDSNLQIELARDMGYAAARYGHVMFPENVHEPALRCAELLLGGVGKDWASRVYFSDNGSTAIEIALKMAFRKYACDHGIIVDSEKDIRSEGSVHFKVLALNGSYHGDTLGAMEAQAPSAYTSFLQQPWYSGRGLFLDPPTVYIKNKSANLSLPPSIMHDQLSSCDTCFSSLTEVFCKTRDTSSAANVYVSYISQQLSQYAMSNNSEHIAALIIEPVIQGAGGMHLIDPLFQRLLVKECKNRKIPVIFDEVFTGFWRLGVESASELLGCFPDISCYAKLMTGGIVPLAATLATEPIFEAFRSDSKLTALLHGHSYTAHPMGCTAAVKAIQWYKDPSTNSNIDLDRMKLKELWDSALVNHLSSLPNVKRVVSLGTLCAIELKAEGSDAGYASLYASSLIRQLREEDNIYARPLGNVIYLMCGPCTTQDSCTRQLAKVHRRLQKLN</sequence>
<protein>
    <recommendedName>
        <fullName>Bifunctional dethiobiotin synthetase/7,8-diamino-pelargonic acid aminotransferase, mitochondrial</fullName>
    </recommendedName>
    <alternativeName>
        <fullName>Bifunctional BIO3-BIO1 protein</fullName>
    </alternativeName>
    <domain>
        <recommendedName>
            <fullName>Dethiobiotin synthetase</fullName>
            <ecNumber>6.3.3.3</ecNumber>
        </recommendedName>
        <alternativeName>
            <fullName>DTB synthetase</fullName>
            <shortName>DTBS</shortName>
        </alternativeName>
        <alternativeName>
            <fullName>Protein BIOTIN AUXOTROPH 3</fullName>
        </alternativeName>
    </domain>
    <domain>
        <recommendedName>
            <fullName>7,8-diamino-pelargonic acid aminotransferase</fullName>
            <shortName>DAPA AT</shortName>
            <shortName>DAPA aminotransferase</shortName>
        </recommendedName>
        <alternativeName>
            <fullName>7,8-diaminononanoate synthase</fullName>
            <shortName>DANS</shortName>
        </alternativeName>
        <alternativeName>
            <fullName>Adenosylmethionine-8-amino-7-oxononanoate aminotransferase</fullName>
            <ecNumber>2.6.1.62</ecNumber>
        </alternativeName>
        <alternativeName>
            <fullName>Diaminopelargonic acid synthase</fullName>
        </alternativeName>
        <alternativeName>
            <fullName>Protein BIOTIN AUXOTROPH 1</fullName>
        </alternativeName>
    </domain>
</protein>
<feature type="transit peptide" description="Mitochondrion" evidence="2">
    <location>
        <begin position="1"/>
        <end status="unknown"/>
    </location>
</feature>
<feature type="chain" id="PRO_0000417697" description="Bifunctional dethiobiotin synthetase/7,8-diamino-pelargonic acid aminotransferase, mitochondrial">
    <location>
        <begin status="unknown"/>
        <end position="821"/>
    </location>
</feature>
<feature type="region of interest" description="Dethiobiotin synthetase">
    <location>
        <begin position="28"/>
        <end position="283"/>
    </location>
</feature>
<feature type="region of interest" description="7,8-diamino-pelargonic acid aminotransferase">
    <location>
        <begin position="316"/>
        <end position="820"/>
    </location>
</feature>
<feature type="binding site" evidence="1">
    <location>
        <begin position="39"/>
        <end position="44"/>
    </location>
    <ligand>
        <name>ATP</name>
        <dbReference type="ChEBI" id="CHEBI:30616"/>
    </ligand>
</feature>
<feature type="binding site" evidence="1">
    <location>
        <position position="43"/>
    </location>
    <ligand>
        <name>Mg(2+)</name>
        <dbReference type="ChEBI" id="CHEBI:18420"/>
    </ligand>
</feature>
<feature type="binding site" evidence="1">
    <location>
        <position position="72"/>
    </location>
    <ligand>
        <name>substrate</name>
    </ligand>
</feature>
<feature type="binding site" evidence="1">
    <location>
        <begin position="194"/>
        <end position="197"/>
    </location>
    <ligand>
        <name>ATP</name>
        <dbReference type="ChEBI" id="CHEBI:30616"/>
    </ligand>
</feature>
<feature type="binding site" evidence="1">
    <location>
        <position position="194"/>
    </location>
    <ligand>
        <name>Mg(2+)</name>
        <dbReference type="ChEBI" id="CHEBI:18420"/>
    </ligand>
</feature>
<feature type="binding site" evidence="1">
    <location>
        <begin position="374"/>
        <end position="375"/>
    </location>
    <ligand>
        <name>(8S)-8-amino-7-oxononanoate</name>
        <dbReference type="ChEBI" id="CHEBI:149468"/>
    </ligand>
</feature>
<feature type="binding site" evidence="1">
    <location>
        <begin position="436"/>
        <end position="437"/>
    </location>
    <ligand>
        <name>pyridoxal 5'-phosphate</name>
        <dbReference type="ChEBI" id="CHEBI:597326"/>
    </ligand>
</feature>
<feature type="binding site" evidence="1">
    <location>
        <position position="482"/>
    </location>
    <ligand>
        <name>(8S)-8-amino-7-oxononanoate</name>
        <dbReference type="ChEBI" id="CHEBI:149468"/>
    </ligand>
</feature>
<feature type="binding site" evidence="1">
    <location>
        <position position="626"/>
    </location>
    <ligand>
        <name>pyridoxal 5'-phosphate</name>
        <dbReference type="ChEBI" id="CHEBI:597326"/>
    </ligand>
</feature>
<feature type="binding site" evidence="1">
    <location>
        <position position="655"/>
    </location>
    <ligand>
        <name>(8S)-8-amino-7-oxononanoate</name>
        <dbReference type="ChEBI" id="CHEBI:149468"/>
    </ligand>
</feature>
<feature type="binding site" evidence="1">
    <location>
        <position position="689"/>
    </location>
    <ligand>
        <name>(8S)-8-amino-7-oxononanoate</name>
        <dbReference type="ChEBI" id="CHEBI:149468"/>
    </ligand>
</feature>
<feature type="binding site" evidence="1">
    <location>
        <position position="691"/>
    </location>
    <ligand>
        <name>pyridoxal 5'-phosphate</name>
        <dbReference type="ChEBI" id="CHEBI:597326"/>
    </ligand>
</feature>
<feature type="binding site" evidence="1">
    <location>
        <position position="787"/>
    </location>
    <ligand>
        <name>(8S)-8-amino-7-oxononanoate</name>
        <dbReference type="ChEBI" id="CHEBI:149468"/>
    </ligand>
</feature>
<feature type="site" description="Participates in the substrate recognition with KAPA and in a stacking interaction with the adenine ring of SAM" evidence="1">
    <location>
        <position position="332"/>
    </location>
</feature>
<feature type="modified residue" description="N6-(pyridoxal phosphate)lysine" evidence="1">
    <location>
        <position position="655"/>
    </location>
</feature>
<reference key="1">
    <citation type="journal article" date="2005" name="Nature">
        <title>The map-based sequence of the rice genome.</title>
        <authorList>
            <consortium name="International rice genome sequencing project (IRGSP)"/>
        </authorList>
    </citation>
    <scope>NUCLEOTIDE SEQUENCE [LARGE SCALE GENOMIC DNA]</scope>
    <source>
        <strain>cv. Nipponbare</strain>
    </source>
</reference>
<reference key="2">
    <citation type="journal article" date="2008" name="Nucleic Acids Res.">
        <title>The rice annotation project database (RAP-DB): 2008 update.</title>
        <authorList>
            <consortium name="The rice annotation project (RAP)"/>
        </authorList>
    </citation>
    <scope>GENOME REANNOTATION</scope>
    <source>
        <strain>cv. Nipponbare</strain>
    </source>
</reference>
<reference key="3">
    <citation type="journal article" date="2013" name="Rice">
        <title>Improvement of the Oryza sativa Nipponbare reference genome using next generation sequence and optical map data.</title>
        <authorList>
            <person name="Kawahara Y."/>
            <person name="de la Bastide M."/>
            <person name="Hamilton J.P."/>
            <person name="Kanamori H."/>
            <person name="McCombie W.R."/>
            <person name="Ouyang S."/>
            <person name="Schwartz D.C."/>
            <person name="Tanaka T."/>
            <person name="Wu J."/>
            <person name="Zhou S."/>
            <person name="Childs K.L."/>
            <person name="Davidson R.M."/>
            <person name="Lin H."/>
            <person name="Quesada-Ocampo L."/>
            <person name="Vaillancourt B."/>
            <person name="Sakai H."/>
            <person name="Lee S.S."/>
            <person name="Kim J."/>
            <person name="Numa H."/>
            <person name="Itoh T."/>
            <person name="Buell C.R."/>
            <person name="Matsumoto T."/>
        </authorList>
    </citation>
    <scope>GENOME REANNOTATION</scope>
    <source>
        <strain>cv. Nipponbare</strain>
    </source>
</reference>
<reference key="4">
    <citation type="journal article" date="2005" name="PLoS Biol.">
        <title>The genomes of Oryza sativa: a history of duplications.</title>
        <authorList>
            <person name="Yu J."/>
            <person name="Wang J."/>
            <person name="Lin W."/>
            <person name="Li S."/>
            <person name="Li H."/>
            <person name="Zhou J."/>
            <person name="Ni P."/>
            <person name="Dong W."/>
            <person name="Hu S."/>
            <person name="Zeng C."/>
            <person name="Zhang J."/>
            <person name="Zhang Y."/>
            <person name="Li R."/>
            <person name="Xu Z."/>
            <person name="Li S."/>
            <person name="Li X."/>
            <person name="Zheng H."/>
            <person name="Cong L."/>
            <person name="Lin L."/>
            <person name="Yin J."/>
            <person name="Geng J."/>
            <person name="Li G."/>
            <person name="Shi J."/>
            <person name="Liu J."/>
            <person name="Lv H."/>
            <person name="Li J."/>
            <person name="Wang J."/>
            <person name="Deng Y."/>
            <person name="Ran L."/>
            <person name="Shi X."/>
            <person name="Wang X."/>
            <person name="Wu Q."/>
            <person name="Li C."/>
            <person name="Ren X."/>
            <person name="Wang J."/>
            <person name="Wang X."/>
            <person name="Li D."/>
            <person name="Liu D."/>
            <person name="Zhang X."/>
            <person name="Ji Z."/>
            <person name="Zhao W."/>
            <person name="Sun Y."/>
            <person name="Zhang Z."/>
            <person name="Bao J."/>
            <person name="Han Y."/>
            <person name="Dong L."/>
            <person name="Ji J."/>
            <person name="Chen P."/>
            <person name="Wu S."/>
            <person name="Liu J."/>
            <person name="Xiao Y."/>
            <person name="Bu D."/>
            <person name="Tan J."/>
            <person name="Yang L."/>
            <person name="Ye C."/>
            <person name="Zhang J."/>
            <person name="Xu J."/>
            <person name="Zhou Y."/>
            <person name="Yu Y."/>
            <person name="Zhang B."/>
            <person name="Zhuang S."/>
            <person name="Wei H."/>
            <person name="Liu B."/>
            <person name="Lei M."/>
            <person name="Yu H."/>
            <person name="Li Y."/>
            <person name="Xu H."/>
            <person name="Wei S."/>
            <person name="He X."/>
            <person name="Fang L."/>
            <person name="Zhang Z."/>
            <person name="Zhang Y."/>
            <person name="Huang X."/>
            <person name="Su Z."/>
            <person name="Tong W."/>
            <person name="Li J."/>
            <person name="Tong Z."/>
            <person name="Li S."/>
            <person name="Ye J."/>
            <person name="Wang L."/>
            <person name="Fang L."/>
            <person name="Lei T."/>
            <person name="Chen C.-S."/>
            <person name="Chen H.-C."/>
            <person name="Xu Z."/>
            <person name="Li H."/>
            <person name="Huang H."/>
            <person name="Zhang F."/>
            <person name="Xu H."/>
            <person name="Li N."/>
            <person name="Zhao C."/>
            <person name="Li S."/>
            <person name="Dong L."/>
            <person name="Huang Y."/>
            <person name="Li L."/>
            <person name="Xi Y."/>
            <person name="Qi Q."/>
            <person name="Li W."/>
            <person name="Zhang B."/>
            <person name="Hu W."/>
            <person name="Zhang Y."/>
            <person name="Tian X."/>
            <person name="Jiao Y."/>
            <person name="Liang X."/>
            <person name="Jin J."/>
            <person name="Gao L."/>
            <person name="Zheng W."/>
            <person name="Hao B."/>
            <person name="Liu S.-M."/>
            <person name="Wang W."/>
            <person name="Yuan L."/>
            <person name="Cao M."/>
            <person name="McDermott J."/>
            <person name="Samudrala R."/>
            <person name="Wang J."/>
            <person name="Wong G.K.-S."/>
            <person name="Yang H."/>
        </authorList>
    </citation>
    <scope>NUCLEOTIDE SEQUENCE [LARGE SCALE GENOMIC DNA]</scope>
    <source>
        <strain>cv. Nipponbare</strain>
    </source>
</reference>
<reference key="5">
    <citation type="journal article" date="2003" name="Science">
        <title>Collection, mapping, and annotation of over 28,000 cDNA clones from japonica rice.</title>
        <authorList>
            <consortium name="The rice full-length cDNA consortium"/>
        </authorList>
    </citation>
    <scope>NUCLEOTIDE SEQUENCE [LARGE SCALE MRNA]</scope>
    <source>
        <strain>cv. Nipponbare</strain>
    </source>
</reference>
<organism>
    <name type="scientific">Oryza sativa subsp. japonica</name>
    <name type="common">Rice</name>
    <dbReference type="NCBI Taxonomy" id="39947"/>
    <lineage>
        <taxon>Eukaryota</taxon>
        <taxon>Viridiplantae</taxon>
        <taxon>Streptophyta</taxon>
        <taxon>Embryophyta</taxon>
        <taxon>Tracheophyta</taxon>
        <taxon>Spermatophyta</taxon>
        <taxon>Magnoliopsida</taxon>
        <taxon>Liliopsida</taxon>
        <taxon>Poales</taxon>
        <taxon>Poaceae</taxon>
        <taxon>BOP clade</taxon>
        <taxon>Oryzoideae</taxon>
        <taxon>Oryzeae</taxon>
        <taxon>Oryzinae</taxon>
        <taxon>Oryza</taxon>
        <taxon>Oryza sativa</taxon>
    </lineage>
</organism>
<keyword id="KW-0032">Aminotransferase</keyword>
<keyword id="KW-0067">ATP-binding</keyword>
<keyword id="KW-0093">Biotin biosynthesis</keyword>
<keyword id="KW-0436">Ligase</keyword>
<keyword id="KW-0460">Magnesium</keyword>
<keyword id="KW-0479">Metal-binding</keyword>
<keyword id="KW-0496">Mitochondrion</keyword>
<keyword id="KW-0511">Multifunctional enzyme</keyword>
<keyword id="KW-0547">Nucleotide-binding</keyword>
<keyword id="KW-0663">Pyridoxal phosphate</keyword>
<keyword id="KW-1185">Reference proteome</keyword>
<keyword id="KW-0949">S-adenosyl-L-methionine</keyword>
<keyword id="KW-0808">Transferase</keyword>
<keyword id="KW-0809">Transit peptide</keyword>
<name>BIODA_ORYSJ</name>
<comment type="function">
    <text>Bifunctional enzyme that catalyzes two different reactions involved in the biotin biosynthesis.</text>
</comment>
<comment type="function">
    <text evidence="1">Catalyzes a mechanistically unusual reaction, the ATP-dependent insertion of CO2 between the N7 and N8 nitrogen atoms of 7,8-diaminopelargonic acid (DAPA) to form an ureido ring.</text>
</comment>
<comment type="function">
    <text evidence="1">Catalyzes the transfer of the alpha-amino group from S-adenosyl-L-methionine (SAM) to 7-keto-8-aminopelargonic acid (KAPA) to form 7,8-diaminopelargonic acid (DAPA). It is the only aminotransferase known to utilize SAM as an amino donor (By similarity).</text>
</comment>
<comment type="catalytic activity">
    <reaction>
        <text>(7R,8S)-7,8-diammoniononanoate + CO2 + ATP = (4R,5S)-dethiobiotin + ADP + phosphate + 3 H(+)</text>
        <dbReference type="Rhea" id="RHEA:15805"/>
        <dbReference type="ChEBI" id="CHEBI:15378"/>
        <dbReference type="ChEBI" id="CHEBI:16526"/>
        <dbReference type="ChEBI" id="CHEBI:30616"/>
        <dbReference type="ChEBI" id="CHEBI:43474"/>
        <dbReference type="ChEBI" id="CHEBI:149469"/>
        <dbReference type="ChEBI" id="CHEBI:149473"/>
        <dbReference type="ChEBI" id="CHEBI:456216"/>
        <dbReference type="EC" id="6.3.3.3"/>
    </reaction>
</comment>
<comment type="catalytic activity">
    <reaction>
        <text>(8S)-8-amino-7-oxononanoate + S-adenosyl-L-methionine = S-adenosyl-4-methylsulfanyl-2-oxobutanoate + (7R,8S)-7,8-diammoniononanoate</text>
        <dbReference type="Rhea" id="RHEA:16861"/>
        <dbReference type="ChEBI" id="CHEBI:16490"/>
        <dbReference type="ChEBI" id="CHEBI:59789"/>
        <dbReference type="ChEBI" id="CHEBI:149468"/>
        <dbReference type="ChEBI" id="CHEBI:149469"/>
        <dbReference type="EC" id="2.6.1.62"/>
    </reaction>
</comment>
<comment type="cofactor">
    <cofactor evidence="1">
        <name>Mg(2+)</name>
        <dbReference type="ChEBI" id="CHEBI:18420"/>
    </cofactor>
</comment>
<comment type="cofactor">
    <cofactor evidence="1">
        <name>pyridoxal 5'-phosphate</name>
        <dbReference type="ChEBI" id="CHEBI:597326"/>
    </cofactor>
</comment>
<comment type="pathway">
    <text>Cofactor biosynthesis; biotin biosynthesis; biotin from 7,8-diaminononanoate: step 1/2.</text>
</comment>
<comment type="pathway">
    <text>Cofactor biosynthesis; biotin biosynthesis; 7,8-diaminononanoate from 8-amino-7-oxononanoate (SAM route): step 1/1.</text>
</comment>
<comment type="subcellular location">
    <subcellularLocation>
        <location evidence="3">Mitochondrion</location>
    </subcellularLocation>
</comment>
<comment type="similarity">
    <text evidence="3">In the N-terminal section; belongs to the dethiobiotin synthetase family.</text>
</comment>
<comment type="similarity">
    <text evidence="3">In the C-terminal section; belongs to the class-III pyridoxal-phosphate-dependent aminotransferase family. BioA subfamily.</text>
</comment>
<proteinExistence type="evidence at transcript level"/>
<accession>Q6ZKV8</accession>
<accession>A0A0P0XDC2</accession>
<evidence type="ECO:0000250" key="1"/>
<evidence type="ECO:0000255" key="2"/>
<evidence type="ECO:0000305" key="3"/>
<gene>
    <name type="primary">BIO3-BIO1</name>
    <name type="synonym">BIO1</name>
    <name type="synonym">BIO3</name>
    <name type="ordered locus">Os08g0245400</name>
    <name type="ordered locus">LOC_Os08g14770</name>
    <name type="ORF">OJ1033_B09.17</name>
    <name type="ORF">OsJ_26590</name>
</gene>